<comment type="function">
    <text evidence="7 8">Component of the chloroplast ribosome (chloro-ribosome), a dedicated translation machinery responsible for the synthesis of chloroplast genome-encoded proteins, including proteins of the transcription and translation machinery and components of the photosynthetic apparatus.</text>
</comment>
<comment type="subunit">
    <text evidence="2 3 4">Component of the chloroplast small ribosomal subunit (SSU). Mature 70S chloroplast ribosomes of higher plants consist of a small (30S) and a large (50S) subunit. The 30S small subunit contains 1 molecule of ribosomal RNA (16S rRNA) and 24 different proteins. The 50S large subunit contains 3 rRNA molecules (23S, 5S and 4.5S rRNA) and 33 different proteins (PubMed:10874039, PubMed:28007896). uS13c interacts with translation factor pY (PSRP1) (PubMed:18042701).</text>
</comment>
<comment type="subcellular location">
    <subcellularLocation>
        <location evidence="2 4">Plastid</location>
        <location evidence="2 4">Chloroplast</location>
    </subcellularLocation>
</comment>
<comment type="mass spectrometry"/>
<comment type="mass spectrometry"/>
<comment type="similarity">
    <text evidence="1">Belongs to the universal ribosomal protein uS13 family.</text>
</comment>
<proteinExistence type="evidence at protein level"/>
<evidence type="ECO:0000255" key="1"/>
<evidence type="ECO:0000269" key="2">
    <source>
    </source>
</evidence>
<evidence type="ECO:0000269" key="3">
    <source>
    </source>
</evidence>
<evidence type="ECO:0000269" key="4">
    <source>
    </source>
</evidence>
<evidence type="ECO:0000303" key="5">
    <source>
    </source>
</evidence>
<evidence type="ECO:0000303" key="6">
    <source>
    </source>
</evidence>
<evidence type="ECO:0000305" key="7">
    <source>
    </source>
</evidence>
<evidence type="ECO:0000305" key="8">
    <source>
    </source>
</evidence>
<keyword id="KW-0002">3D-structure</keyword>
<keyword id="KW-0150">Chloroplast</keyword>
<keyword id="KW-0903">Direct protein sequencing</keyword>
<keyword id="KW-0934">Plastid</keyword>
<keyword id="KW-1185">Reference proteome</keyword>
<keyword id="KW-0687">Ribonucleoprotein</keyword>
<keyword id="KW-0689">Ribosomal protein</keyword>
<keyword id="KW-0694">RNA-binding</keyword>
<keyword id="KW-0699">rRNA-binding</keyword>
<keyword id="KW-0809">Transit peptide</keyword>
<feature type="transit peptide" description="Chloroplast" evidence="2">
    <location>
        <begin position="1"/>
        <end position="47"/>
    </location>
</feature>
<feature type="chain" id="PRO_0000249408" description="Small ribosomal subunit protein uS13c">
    <location>
        <begin position="48"/>
        <end position="172"/>
    </location>
</feature>
<dbReference type="EMBL" id="KQ154327">
    <property type="protein sequence ID" value="KNA12871.1"/>
    <property type="molecule type" value="Genomic_DNA"/>
</dbReference>
<dbReference type="PDB" id="4V61">
    <property type="method" value="EM"/>
    <property type="resolution" value="9.40 A"/>
    <property type="chains" value="AM=5-156"/>
</dbReference>
<dbReference type="PDB" id="5MMJ">
    <property type="method" value="EM"/>
    <property type="resolution" value="3.65 A"/>
    <property type="chains" value="m=1-172"/>
</dbReference>
<dbReference type="PDB" id="5MMM">
    <property type="method" value="EM"/>
    <property type="resolution" value="3.40 A"/>
    <property type="chains" value="m=1-172"/>
</dbReference>
<dbReference type="PDB" id="5X8P">
    <property type="method" value="EM"/>
    <property type="resolution" value="3.40 A"/>
    <property type="chains" value="m=27-155"/>
</dbReference>
<dbReference type="PDB" id="5X8R">
    <property type="method" value="EM"/>
    <property type="resolution" value="3.70 A"/>
    <property type="chains" value="m=27-155"/>
</dbReference>
<dbReference type="PDB" id="6ERI">
    <property type="method" value="EM"/>
    <property type="resolution" value="3.00 A"/>
    <property type="chains" value="BM=48-158"/>
</dbReference>
<dbReference type="PDBsum" id="4V61"/>
<dbReference type="PDBsum" id="5MMJ"/>
<dbReference type="PDBsum" id="5MMM"/>
<dbReference type="PDBsum" id="5X8P"/>
<dbReference type="PDBsum" id="5X8R"/>
<dbReference type="PDBsum" id="6ERI"/>
<dbReference type="EMDB" id="EMD-3532"/>
<dbReference type="EMDB" id="EMD-3533"/>
<dbReference type="EMDB" id="EMD-3941"/>
<dbReference type="EMDB" id="EMD-6709"/>
<dbReference type="EMDB" id="EMD-6710"/>
<dbReference type="SMR" id="P82163"/>
<dbReference type="STRING" id="3562.P82163"/>
<dbReference type="OrthoDB" id="525520at2759"/>
<dbReference type="Proteomes" id="UP001155700">
    <property type="component" value="Unplaced"/>
</dbReference>
<dbReference type="GO" id="GO:0009507">
    <property type="term" value="C:chloroplast"/>
    <property type="evidence" value="ECO:0007669"/>
    <property type="project" value="UniProtKB-SubCell"/>
</dbReference>
<dbReference type="GO" id="GO:0005739">
    <property type="term" value="C:mitochondrion"/>
    <property type="evidence" value="ECO:0000318"/>
    <property type="project" value="GO_Central"/>
</dbReference>
<dbReference type="GO" id="GO:0015935">
    <property type="term" value="C:small ribosomal subunit"/>
    <property type="evidence" value="ECO:0000318"/>
    <property type="project" value="GO_Central"/>
</dbReference>
<dbReference type="GO" id="GO:0019843">
    <property type="term" value="F:rRNA binding"/>
    <property type="evidence" value="ECO:0007669"/>
    <property type="project" value="UniProtKB-KW"/>
</dbReference>
<dbReference type="GO" id="GO:0003735">
    <property type="term" value="F:structural constituent of ribosome"/>
    <property type="evidence" value="ECO:0007669"/>
    <property type="project" value="InterPro"/>
</dbReference>
<dbReference type="GO" id="GO:0006412">
    <property type="term" value="P:translation"/>
    <property type="evidence" value="ECO:0007669"/>
    <property type="project" value="InterPro"/>
</dbReference>
<dbReference type="FunFam" id="1.10.8.50:FF:000001">
    <property type="entry name" value="30S ribosomal protein S13"/>
    <property type="match status" value="1"/>
</dbReference>
<dbReference type="Gene3D" id="1.10.8.50">
    <property type="match status" value="1"/>
</dbReference>
<dbReference type="Gene3D" id="4.10.910.10">
    <property type="entry name" value="30s ribosomal protein s13, domain 2"/>
    <property type="match status" value="1"/>
</dbReference>
<dbReference type="HAMAP" id="MF_01315">
    <property type="entry name" value="Ribosomal_uS13"/>
    <property type="match status" value="1"/>
</dbReference>
<dbReference type="InterPro" id="IPR027437">
    <property type="entry name" value="Rbsml_uS13_C"/>
</dbReference>
<dbReference type="InterPro" id="IPR001892">
    <property type="entry name" value="Ribosomal_uS13"/>
</dbReference>
<dbReference type="InterPro" id="IPR010979">
    <property type="entry name" value="Ribosomal_uS13-like_H2TH"/>
</dbReference>
<dbReference type="InterPro" id="IPR018269">
    <property type="entry name" value="Ribosomal_uS13_CS"/>
</dbReference>
<dbReference type="PANTHER" id="PTHR10871">
    <property type="entry name" value="30S RIBOSOMAL PROTEIN S13/40S RIBOSOMAL PROTEIN S18"/>
    <property type="match status" value="1"/>
</dbReference>
<dbReference type="PANTHER" id="PTHR10871:SF1">
    <property type="entry name" value="SMALL RIBOSOMAL SUBUNIT PROTEIN US13M"/>
    <property type="match status" value="1"/>
</dbReference>
<dbReference type="Pfam" id="PF00416">
    <property type="entry name" value="Ribosomal_S13"/>
    <property type="match status" value="1"/>
</dbReference>
<dbReference type="SUPFAM" id="SSF46946">
    <property type="entry name" value="S13-like H2TH domain"/>
    <property type="match status" value="1"/>
</dbReference>
<dbReference type="PROSITE" id="PS00646">
    <property type="entry name" value="RIBOSOMAL_S13_1"/>
    <property type="match status" value="1"/>
</dbReference>
<dbReference type="PROSITE" id="PS50159">
    <property type="entry name" value="RIBOSOMAL_S13_2"/>
    <property type="match status" value="1"/>
</dbReference>
<reference key="1">
    <citation type="journal article" date="2014" name="Nature">
        <title>The genome of the recently domesticated crop plant sugar beet (Beta vulgaris).</title>
        <authorList>
            <person name="Dohm J.C."/>
            <person name="Minoche A.E."/>
            <person name="Holtgraewe D."/>
            <person name="Capella-Gutierrez S."/>
            <person name="Zakrzewski F."/>
            <person name="Tafer H."/>
            <person name="Rupp O."/>
            <person name="Soerensen T.R."/>
            <person name="Stracke R."/>
            <person name="Reinhardt R."/>
            <person name="Goesmann A."/>
            <person name="Kraft T."/>
            <person name="Schulz B."/>
            <person name="Stadler P.F."/>
            <person name="Schmidt T."/>
            <person name="Gabaldon T."/>
            <person name="Lehrach H."/>
            <person name="Weisshaar B."/>
            <person name="Himmelbauer H."/>
        </authorList>
    </citation>
    <scope>NUCLEOTIDE SEQUENCE [LARGE SCALE GENOMIC DNA]</scope>
    <source>
        <strain>cv. Viroflay</strain>
        <tissue>Leaf</tissue>
    </source>
</reference>
<reference key="2">
    <citation type="journal article" date="2000" name="J. Biol. Chem.">
        <title>The plastid ribosomal proteins. Identification of all the proteins in the 30S subunit of an organelle ribosome (chloroplast).</title>
        <authorList>
            <person name="Yamaguchi K."/>
            <person name="von Knoblauch K."/>
            <person name="Subramanian A.R."/>
        </authorList>
    </citation>
    <scope>PROTEIN SEQUENCE OF 48-67</scope>
    <scope>SUBUNIT</scope>
    <scope>SUBCELLULAR LOCATION</scope>
    <scope>MASS SPECTROMETRY</scope>
    <source>
        <strain>cv. Alwaro</strain>
        <tissue>Leaf</tissue>
    </source>
</reference>
<reference key="3">
    <citation type="journal article" date="2007" name="Proc. Natl. Acad. Sci. U.S.A.">
        <title>Cryo-EM study of the spinach chloroplast ribosome reveals the structural and functional roles of plastid-specific ribosomal proteins.</title>
        <authorList>
            <person name="Sharma M.R."/>
            <person name="Wilson D.N."/>
            <person name="Datta P.P."/>
            <person name="Barat C."/>
            <person name="Schluenzen F."/>
            <person name="Fucini P."/>
            <person name="Agrawal R.K."/>
        </authorList>
    </citation>
    <scope>STRUCTURE BY ELECTRON MICROSCOPY (9.4 ANGSTROMS)</scope>
    <scope>INTERACTION WITH PSRP1</scope>
</reference>
<reference key="4">
    <citation type="journal article" date="2017" name="EMBO J.">
        <title>The complete structure of the chloroplast 70S ribosome in complex with translation factor pY.</title>
        <authorList>
            <person name="Bieri P."/>
            <person name="Leibundgut M."/>
            <person name="Saurer M."/>
            <person name="Boehringer D."/>
            <person name="Ban N."/>
        </authorList>
    </citation>
    <scope>STRUCTURE BY ELECTRON MICROSCOPY (3.40 ANGSTROMS)</scope>
    <scope>SUBUNIT</scope>
    <scope>SUBCELLULAR LOCATION</scope>
</reference>
<sequence>MAHTLATPVAPSVSLICNTKLSVSLSSSSLAFRPVNPKNGGGLSIKCVRVGNVEIPNNKRVEYSLQYIHGIGRSRARQILCDLTLENKLTKELSEDELLQVRDEVTKYMIEGDLRRFNAIAIRRLKEIQCYRGVRHIQGLPCRGQRTKNNCRTLKRGKRVQIAGKKKPPGPK</sequence>
<gene>
    <name type="primary">RPS13</name>
    <name type="ORF">SOVF_121110</name>
</gene>
<name>RR13_SPIOL</name>
<accession>P82163</accession>
<accession>A0A0K9R024</accession>
<protein>
    <recommendedName>
        <fullName evidence="6">Small ribosomal subunit protein uS13c</fullName>
    </recommendedName>
    <alternativeName>
        <fullName evidence="5">30S ribosomal protein S13, chloroplastic</fullName>
    </alternativeName>
</protein>
<organism>
    <name type="scientific">Spinacia oleracea</name>
    <name type="common">Spinach</name>
    <dbReference type="NCBI Taxonomy" id="3562"/>
    <lineage>
        <taxon>Eukaryota</taxon>
        <taxon>Viridiplantae</taxon>
        <taxon>Streptophyta</taxon>
        <taxon>Embryophyta</taxon>
        <taxon>Tracheophyta</taxon>
        <taxon>Spermatophyta</taxon>
        <taxon>Magnoliopsida</taxon>
        <taxon>eudicotyledons</taxon>
        <taxon>Gunneridae</taxon>
        <taxon>Pentapetalae</taxon>
        <taxon>Caryophyllales</taxon>
        <taxon>Chenopodiaceae</taxon>
        <taxon>Chenopodioideae</taxon>
        <taxon>Anserineae</taxon>
        <taxon>Spinacia</taxon>
    </lineage>
</organism>